<evidence type="ECO:0000269" key="1">
    <source>
    </source>
</evidence>
<evidence type="ECO:0000303" key="2">
    <source>
    </source>
</evidence>
<evidence type="ECO:0000305" key="3"/>
<evidence type="ECO:0000305" key="4">
    <source>
    </source>
</evidence>
<feature type="chain" id="PRO_0000446590" description="Monooxygenase PC-14">
    <location>
        <begin position="1"/>
        <end position="577"/>
    </location>
</feature>
<reference key="1">
    <citation type="journal article" date="2015" name="Toxins">
        <title>Molecular cloning and functional analysis of gene clusters for the biosynthesis of indole-diterpenes in Penicillium crustosum and P. janthinellum.</title>
        <authorList>
            <person name="Nicholson M.J."/>
            <person name="Eaton C.J."/>
            <person name="Starkel C."/>
            <person name="Tapper B.A."/>
            <person name="Cox M.P."/>
            <person name="Scott B."/>
        </authorList>
    </citation>
    <scope>NUCLEOTIDE SEQUENCE [GENOMIC DNA]</scope>
    <scope>IDENTIFICATION</scope>
    <scope>FUNCTION</scope>
    <scope>PATHWAY</scope>
    <source>
        <strain>PN2402</strain>
    </source>
</reference>
<comment type="function">
    <text evidence="1 4">Monooxygenase; part of the gene cluster that mediates the biosynthesis of the indole diterpenes penitrems (PubMed:26213965). The geranylgeranyl diphosphate (GGPP) synthase penG catalyzes the first step in penitrem biosynthesis via conversion of farnesyl pyrophosphate and isopentyl pyrophosphate into geranylgeranyl pyrophosphate (GGPP) (Probable). Condensation of indole-3-glycerol phosphate with GGPP by the prenyl transferase penC then forms 3-geranylgeranylindole (3-GGI) (Probable). Epoxidation by the FAD-dependent monooxygenase penM leads to a epoxidized-GGI that is substrate of the terpene cyclase penB for cyclization to yield paspaline (Probable). Paspaline is subsequently converted to 13-desoxypaxilline by the cytochrome P450 monooxygenase penP, the latter being then converted to paxilline by the cytochrome P450 monooxygenase penQ (PubMed:26213965). Paxilline is converted to beta-paxitriol via C-10 ketoreduction by the short-chain dehydrogenase PC-15 which can be monoprenylated at the C-20 by the indole diterpene prenyltransferase penD (Probable). A two-step elimination (acetylation and elimination) process performed by the O-acetyltransferase PC-16 and the P.simplicissimum ptmI-ortholog not yet identified in P.crustosum, leads to the production of the prenylated form of penijanthine (Probable). The FAD-linked oxidoreductase ptmO then converts the prenylated form of penijanthine into PC-M5 which is in turn transformed into PC-M4 by the aromatic dimethylallyltransferase PC-22 (Probable). A series of oxidation steps involving 4 cytochrome P450 monooxygenases (PC-21, PC-05, PC-23, PC-20) and a FAD-dependent monooxygenase (PC-14) are required for the transformation of PC-M4 to penitrems A and E. Synthesis of these final products is proposed to proceed via penitrems D and C (PC-21, PC-05, PC-14) and penitrems B and F (PC-21, PC-05, PC-14, PC-23) (Probable).</text>
</comment>
<comment type="cofactor">
    <cofactor evidence="3">
        <name>FAD</name>
        <dbReference type="ChEBI" id="CHEBI:57692"/>
    </cofactor>
</comment>
<comment type="pathway">
    <text evidence="4">Secondary metabolite biosynthesis.</text>
</comment>
<comment type="similarity">
    <text evidence="3">Belongs to the FMO family.</text>
</comment>
<name>PC14_PENCR</name>
<gene>
    <name evidence="2" type="primary">PC-14</name>
</gene>
<proteinExistence type="inferred from homology"/>
<dbReference type="EC" id="1.-.-.-" evidence="4"/>
<dbReference type="EMBL" id="KC963408">
    <property type="protein sequence ID" value="AGZ20195.1"/>
    <property type="molecule type" value="Genomic_DNA"/>
</dbReference>
<dbReference type="SMR" id="A0A0E3D8M4"/>
<dbReference type="GO" id="GO:0050660">
    <property type="term" value="F:flavin adenine dinucleotide binding"/>
    <property type="evidence" value="ECO:0007669"/>
    <property type="project" value="InterPro"/>
</dbReference>
<dbReference type="GO" id="GO:0004499">
    <property type="term" value="F:N,N-dimethylaniline monooxygenase activity"/>
    <property type="evidence" value="ECO:0007669"/>
    <property type="project" value="InterPro"/>
</dbReference>
<dbReference type="GO" id="GO:0050661">
    <property type="term" value="F:NADP binding"/>
    <property type="evidence" value="ECO:0007669"/>
    <property type="project" value="InterPro"/>
</dbReference>
<dbReference type="Gene3D" id="3.50.50.60">
    <property type="entry name" value="FAD/NAD(P)-binding domain"/>
    <property type="match status" value="1"/>
</dbReference>
<dbReference type="InterPro" id="IPR036188">
    <property type="entry name" value="FAD/NAD-bd_sf"/>
</dbReference>
<dbReference type="InterPro" id="IPR000960">
    <property type="entry name" value="Flavin_mOase"/>
</dbReference>
<dbReference type="InterPro" id="IPR020946">
    <property type="entry name" value="Flavin_mOase-like"/>
</dbReference>
<dbReference type="InterPro" id="IPR050346">
    <property type="entry name" value="FMO-like"/>
</dbReference>
<dbReference type="PANTHER" id="PTHR23023">
    <property type="entry name" value="DIMETHYLANILINE MONOOXYGENASE"/>
    <property type="match status" value="1"/>
</dbReference>
<dbReference type="Pfam" id="PF00743">
    <property type="entry name" value="FMO-like"/>
    <property type="match status" value="1"/>
</dbReference>
<dbReference type="PIRSF" id="PIRSF000332">
    <property type="entry name" value="FMO"/>
    <property type="match status" value="1"/>
</dbReference>
<dbReference type="PRINTS" id="PR00370">
    <property type="entry name" value="FMOXYGENASE"/>
</dbReference>
<dbReference type="SUPFAM" id="SSF51905">
    <property type="entry name" value="FAD/NAD(P)-binding domain"/>
    <property type="match status" value="1"/>
</dbReference>
<keyword id="KW-0274">FAD</keyword>
<keyword id="KW-0285">Flavoprotein</keyword>
<keyword id="KW-0503">Monooxygenase</keyword>
<keyword id="KW-0521">NADP</keyword>
<keyword id="KW-0560">Oxidoreductase</keyword>
<sequence length="577" mass="64467">MKVAVIGGGPSGLVTLKYLLAAHHFQPVDPIEVQLFESEDRVGGTFSYRTYDRAELVSSAQLTTFSDYRWHDKSVDYLSAVEYVEYLEGYCDRFGLRPHIRLSTQVEKVERTGKGKHRITVSHKGQTSTWDCDAVAVCSGLHVKPNIPSIPGLDRVPVVFHSSEYKHVRQLGQNTNVMVLGTGETGMDIAYFSVTADSTKSTTVCHRNGFVIGPKRLPETKLFGRVTSKTPGKALPVDLSRPYLFVNSYVHRKVRGALQTTLSRWAVKAGSWLVTGTTRGFDQWVGSLPKDKYDESHYFYCKSTKAMPYISAPYRSHSWVHRLRSSIVQAVLPDTGSRKIDLAPWPEYIDEDGVVHFEKNSRPDSKVLLQERRFKPDVLVLATGYTQSFPFLGSEYCTPDQADQRGIWRTGDASVGYIGFVRPSFGAIPPLAEMQVQVWVLNLINRLPGPLVADDSYRLFSNPSGRIEYGVDHDMFAHRLALDIGSAPSFFQALAHGWQVIVFWAMGGTLNTKFRLVGPWAWSGAPRIIHDELLDTVTGRRSTIDLLVALCIRIFQATSVVSSRPSKGDSEVTENRG</sequence>
<accession>A0A0E3D8M4</accession>
<organism>
    <name type="scientific">Penicillium crustosum</name>
    <name type="common">Blue mold fungus</name>
    <dbReference type="NCBI Taxonomy" id="36656"/>
    <lineage>
        <taxon>Eukaryota</taxon>
        <taxon>Fungi</taxon>
        <taxon>Dikarya</taxon>
        <taxon>Ascomycota</taxon>
        <taxon>Pezizomycotina</taxon>
        <taxon>Eurotiomycetes</taxon>
        <taxon>Eurotiomycetidae</taxon>
        <taxon>Eurotiales</taxon>
        <taxon>Aspergillaceae</taxon>
        <taxon>Penicillium</taxon>
    </lineage>
</organism>
<protein>
    <recommendedName>
        <fullName evidence="2">Monooxygenase PC-14</fullName>
        <ecNumber evidence="4">1.-.-.-</ecNumber>
    </recommendedName>
    <alternativeName>
        <fullName evidence="2">Penitrem biosynthesis cluster 1 protein PC-14</fullName>
    </alternativeName>
</protein>